<protein>
    <recommendedName>
        <fullName evidence="1">7-cyano-7-deazaguanine synthase</fullName>
        <ecNumber evidence="1">6.3.4.20</ecNumber>
    </recommendedName>
    <alternativeName>
        <fullName evidence="1">7-cyano-7-carbaguanine synthase</fullName>
    </alternativeName>
    <alternativeName>
        <fullName evidence="1">PreQ(0) synthase</fullName>
    </alternativeName>
    <alternativeName>
        <fullName evidence="1">Queuosine biosynthesis protein QueC</fullName>
    </alternativeName>
</protein>
<accession>B1YFM6</accession>
<feature type="chain" id="PRO_1000186600" description="7-cyano-7-deazaguanine synthase">
    <location>
        <begin position="1"/>
        <end position="218"/>
    </location>
</feature>
<feature type="binding site" evidence="1">
    <location>
        <begin position="10"/>
        <end position="20"/>
    </location>
    <ligand>
        <name>ATP</name>
        <dbReference type="ChEBI" id="CHEBI:30616"/>
    </ligand>
</feature>
<feature type="binding site" evidence="1">
    <location>
        <position position="186"/>
    </location>
    <ligand>
        <name>Zn(2+)</name>
        <dbReference type="ChEBI" id="CHEBI:29105"/>
    </ligand>
</feature>
<feature type="binding site" evidence="1">
    <location>
        <position position="195"/>
    </location>
    <ligand>
        <name>Zn(2+)</name>
        <dbReference type="ChEBI" id="CHEBI:29105"/>
    </ligand>
</feature>
<feature type="binding site" evidence="1">
    <location>
        <position position="198"/>
    </location>
    <ligand>
        <name>Zn(2+)</name>
        <dbReference type="ChEBI" id="CHEBI:29105"/>
    </ligand>
</feature>
<feature type="binding site" evidence="1">
    <location>
        <position position="201"/>
    </location>
    <ligand>
        <name>Zn(2+)</name>
        <dbReference type="ChEBI" id="CHEBI:29105"/>
    </ligand>
</feature>
<reference key="1">
    <citation type="submission" date="2008-04" db="EMBL/GenBank/DDBJ databases">
        <title>Complete sequence of chromosome of Exiguobacterium sibiricum 255-15.</title>
        <authorList>
            <consortium name="US DOE Joint Genome Institute"/>
            <person name="Copeland A."/>
            <person name="Lucas S."/>
            <person name="Lapidus A."/>
            <person name="Glavina del Rio T."/>
            <person name="Dalin E."/>
            <person name="Tice H."/>
            <person name="Bruce D."/>
            <person name="Goodwin L."/>
            <person name="Pitluck S."/>
            <person name="Kiss H."/>
            <person name="Chertkov O."/>
            <person name="Monk C."/>
            <person name="Brettin T."/>
            <person name="Detter J.C."/>
            <person name="Han C."/>
            <person name="Kuske C.R."/>
            <person name="Schmutz J."/>
            <person name="Larimer F."/>
            <person name="Land M."/>
            <person name="Hauser L."/>
            <person name="Kyrpides N."/>
            <person name="Mikhailova N."/>
            <person name="Vishnivetskaya T."/>
            <person name="Rodrigues D.F."/>
            <person name="Gilichinsky D."/>
            <person name="Tiedje J."/>
            <person name="Richardson P."/>
        </authorList>
    </citation>
    <scope>NUCLEOTIDE SEQUENCE [LARGE SCALE GENOMIC DNA]</scope>
    <source>
        <strain>DSM 17290 / CCUG 55495 / CIP 109462 / JCM 13490 / 255-15</strain>
    </source>
</reference>
<proteinExistence type="inferred from homology"/>
<sequence length="218" mass="24158">MKNERALVVFSGGQDSTTCLFQALADYSEVEVVTFNYGQRHAAELDVAREITSELGVKHHELDLSLLSQLTSNSLTDHSQSITTNEDGLPSTFVDGRNHLFLSFAAVLAKGRGIRHIITGVCETDFSGYPDCRDSFIKSLNVTLNLAMDYPFVIHTPLMWLDKKETWALADSLGAFDFVRKRTLTCYNGIIGDGCGDCPACELRKKGLDAYIEEVQHT</sequence>
<evidence type="ECO:0000255" key="1">
    <source>
        <dbReference type="HAMAP-Rule" id="MF_01633"/>
    </source>
</evidence>
<dbReference type="EC" id="6.3.4.20" evidence="1"/>
<dbReference type="EMBL" id="CP001022">
    <property type="protein sequence ID" value="ACB62351.1"/>
    <property type="molecule type" value="Genomic_DNA"/>
</dbReference>
<dbReference type="RefSeq" id="WP_012371767.1">
    <property type="nucleotide sequence ID" value="NC_010556.1"/>
</dbReference>
<dbReference type="SMR" id="B1YFM6"/>
<dbReference type="STRING" id="262543.Exig_2905"/>
<dbReference type="KEGG" id="esi:Exig_2905"/>
<dbReference type="eggNOG" id="COG0603">
    <property type="taxonomic scope" value="Bacteria"/>
</dbReference>
<dbReference type="HOGENOM" id="CLU_081854_0_0_9"/>
<dbReference type="OrthoDB" id="9789567at2"/>
<dbReference type="UniPathway" id="UPA00391"/>
<dbReference type="Proteomes" id="UP000001681">
    <property type="component" value="Chromosome"/>
</dbReference>
<dbReference type="GO" id="GO:0005524">
    <property type="term" value="F:ATP binding"/>
    <property type="evidence" value="ECO:0007669"/>
    <property type="project" value="UniProtKB-UniRule"/>
</dbReference>
<dbReference type="GO" id="GO:0016879">
    <property type="term" value="F:ligase activity, forming carbon-nitrogen bonds"/>
    <property type="evidence" value="ECO:0007669"/>
    <property type="project" value="UniProtKB-UniRule"/>
</dbReference>
<dbReference type="GO" id="GO:0008270">
    <property type="term" value="F:zinc ion binding"/>
    <property type="evidence" value="ECO:0007669"/>
    <property type="project" value="UniProtKB-UniRule"/>
</dbReference>
<dbReference type="GO" id="GO:0008616">
    <property type="term" value="P:queuosine biosynthetic process"/>
    <property type="evidence" value="ECO:0007669"/>
    <property type="project" value="UniProtKB-UniRule"/>
</dbReference>
<dbReference type="CDD" id="cd01995">
    <property type="entry name" value="QueC-like"/>
    <property type="match status" value="1"/>
</dbReference>
<dbReference type="FunFam" id="3.40.50.620:FF:000017">
    <property type="entry name" value="7-cyano-7-deazaguanine synthase"/>
    <property type="match status" value="1"/>
</dbReference>
<dbReference type="Gene3D" id="3.40.50.620">
    <property type="entry name" value="HUPs"/>
    <property type="match status" value="1"/>
</dbReference>
<dbReference type="HAMAP" id="MF_01633">
    <property type="entry name" value="QueC"/>
    <property type="match status" value="1"/>
</dbReference>
<dbReference type="InterPro" id="IPR018317">
    <property type="entry name" value="QueC"/>
</dbReference>
<dbReference type="InterPro" id="IPR014729">
    <property type="entry name" value="Rossmann-like_a/b/a_fold"/>
</dbReference>
<dbReference type="NCBIfam" id="TIGR00364">
    <property type="entry name" value="7-cyano-7-deazaguanine synthase QueC"/>
    <property type="match status" value="1"/>
</dbReference>
<dbReference type="PANTHER" id="PTHR42914">
    <property type="entry name" value="7-CYANO-7-DEAZAGUANINE SYNTHASE"/>
    <property type="match status" value="1"/>
</dbReference>
<dbReference type="PANTHER" id="PTHR42914:SF1">
    <property type="entry name" value="7-CYANO-7-DEAZAGUANINE SYNTHASE"/>
    <property type="match status" value="1"/>
</dbReference>
<dbReference type="Pfam" id="PF06508">
    <property type="entry name" value="QueC"/>
    <property type="match status" value="1"/>
</dbReference>
<dbReference type="PIRSF" id="PIRSF006293">
    <property type="entry name" value="ExsB"/>
    <property type="match status" value="1"/>
</dbReference>
<dbReference type="SUPFAM" id="SSF52402">
    <property type="entry name" value="Adenine nucleotide alpha hydrolases-like"/>
    <property type="match status" value="1"/>
</dbReference>
<comment type="function">
    <text evidence="1">Catalyzes the ATP-dependent conversion of 7-carboxy-7-deazaguanine (CDG) to 7-cyano-7-deazaguanine (preQ(0)).</text>
</comment>
<comment type="catalytic activity">
    <reaction evidence="1">
        <text>7-carboxy-7-deazaguanine + NH4(+) + ATP = 7-cyano-7-deazaguanine + ADP + phosphate + H2O + H(+)</text>
        <dbReference type="Rhea" id="RHEA:27982"/>
        <dbReference type="ChEBI" id="CHEBI:15377"/>
        <dbReference type="ChEBI" id="CHEBI:15378"/>
        <dbReference type="ChEBI" id="CHEBI:28938"/>
        <dbReference type="ChEBI" id="CHEBI:30616"/>
        <dbReference type="ChEBI" id="CHEBI:43474"/>
        <dbReference type="ChEBI" id="CHEBI:45075"/>
        <dbReference type="ChEBI" id="CHEBI:61036"/>
        <dbReference type="ChEBI" id="CHEBI:456216"/>
        <dbReference type="EC" id="6.3.4.20"/>
    </reaction>
</comment>
<comment type="cofactor">
    <cofactor evidence="1">
        <name>Zn(2+)</name>
        <dbReference type="ChEBI" id="CHEBI:29105"/>
    </cofactor>
    <text evidence="1">Binds 1 zinc ion per subunit.</text>
</comment>
<comment type="pathway">
    <text evidence="1">Purine metabolism; 7-cyano-7-deazaguanine biosynthesis.</text>
</comment>
<comment type="subunit">
    <text evidence="1">Homodimer.</text>
</comment>
<comment type="similarity">
    <text evidence="1">Belongs to the QueC family.</text>
</comment>
<keyword id="KW-0067">ATP-binding</keyword>
<keyword id="KW-0436">Ligase</keyword>
<keyword id="KW-0479">Metal-binding</keyword>
<keyword id="KW-0547">Nucleotide-binding</keyword>
<keyword id="KW-0671">Queuosine biosynthesis</keyword>
<keyword id="KW-1185">Reference proteome</keyword>
<keyword id="KW-0862">Zinc</keyword>
<organism>
    <name type="scientific">Exiguobacterium sibiricum (strain DSM 17290 / CCUG 55495 / CIP 109462 / JCM 13490 / 255-15)</name>
    <dbReference type="NCBI Taxonomy" id="262543"/>
    <lineage>
        <taxon>Bacteria</taxon>
        <taxon>Bacillati</taxon>
        <taxon>Bacillota</taxon>
        <taxon>Bacilli</taxon>
        <taxon>Bacillales</taxon>
        <taxon>Bacillales Family XII. Incertae Sedis</taxon>
        <taxon>Exiguobacterium</taxon>
    </lineage>
</organism>
<gene>
    <name evidence="1" type="primary">queC</name>
    <name type="ordered locus">Exig_2905</name>
</gene>
<name>QUEC_EXIS2</name>